<evidence type="ECO:0000255" key="1">
    <source>
        <dbReference type="HAMAP-Rule" id="MF_01400"/>
    </source>
</evidence>
<evidence type="ECO:0000255" key="2">
    <source>
        <dbReference type="PROSITE-ProRule" id="PRU01126"/>
    </source>
</evidence>
<comment type="catalytic activity">
    <reaction evidence="1">
        <text>L-methionyl-[protein] + [thioredoxin]-disulfide + H2O = L-methionyl-(R)-S-oxide-[protein] + [thioredoxin]-dithiol</text>
        <dbReference type="Rhea" id="RHEA:24164"/>
        <dbReference type="Rhea" id="RHEA-COMP:10698"/>
        <dbReference type="Rhea" id="RHEA-COMP:10700"/>
        <dbReference type="Rhea" id="RHEA-COMP:12313"/>
        <dbReference type="Rhea" id="RHEA-COMP:12314"/>
        <dbReference type="ChEBI" id="CHEBI:15377"/>
        <dbReference type="ChEBI" id="CHEBI:16044"/>
        <dbReference type="ChEBI" id="CHEBI:29950"/>
        <dbReference type="ChEBI" id="CHEBI:45764"/>
        <dbReference type="ChEBI" id="CHEBI:50058"/>
        <dbReference type="EC" id="1.8.4.12"/>
    </reaction>
</comment>
<comment type="similarity">
    <text evidence="1">Belongs to the MsrB Met sulfoxide reductase family.</text>
</comment>
<dbReference type="EC" id="1.8.4.12" evidence="1"/>
<dbReference type="EMBL" id="FM204884">
    <property type="protein sequence ID" value="CAW98937.1"/>
    <property type="molecule type" value="Genomic_DNA"/>
</dbReference>
<dbReference type="SMR" id="C0MDV8"/>
<dbReference type="KEGG" id="seq:SZO_07840"/>
<dbReference type="eggNOG" id="COG0229">
    <property type="taxonomic scope" value="Bacteria"/>
</dbReference>
<dbReference type="HOGENOM" id="CLU_031040_8_5_9"/>
<dbReference type="Proteomes" id="UP000001368">
    <property type="component" value="Chromosome"/>
</dbReference>
<dbReference type="GO" id="GO:0005737">
    <property type="term" value="C:cytoplasm"/>
    <property type="evidence" value="ECO:0007669"/>
    <property type="project" value="TreeGrafter"/>
</dbReference>
<dbReference type="GO" id="GO:0033743">
    <property type="term" value="F:peptide-methionine (R)-S-oxide reductase activity"/>
    <property type="evidence" value="ECO:0007669"/>
    <property type="project" value="UniProtKB-UniRule"/>
</dbReference>
<dbReference type="GO" id="GO:0030091">
    <property type="term" value="P:protein repair"/>
    <property type="evidence" value="ECO:0007669"/>
    <property type="project" value="InterPro"/>
</dbReference>
<dbReference type="GO" id="GO:0006979">
    <property type="term" value="P:response to oxidative stress"/>
    <property type="evidence" value="ECO:0007669"/>
    <property type="project" value="InterPro"/>
</dbReference>
<dbReference type="FunFam" id="2.170.150.20:FF:000003">
    <property type="entry name" value="Peptide methionine sulfoxide reductase MsrB"/>
    <property type="match status" value="1"/>
</dbReference>
<dbReference type="Gene3D" id="2.170.150.20">
    <property type="entry name" value="Peptide methionine sulfoxide reductase"/>
    <property type="match status" value="1"/>
</dbReference>
<dbReference type="HAMAP" id="MF_01400">
    <property type="entry name" value="MsrB"/>
    <property type="match status" value="1"/>
</dbReference>
<dbReference type="InterPro" id="IPR028427">
    <property type="entry name" value="Met_Sox_Rdtase_MsrB"/>
</dbReference>
<dbReference type="InterPro" id="IPR002579">
    <property type="entry name" value="Met_Sox_Rdtase_MsrB_dom"/>
</dbReference>
<dbReference type="InterPro" id="IPR011057">
    <property type="entry name" value="Mss4-like_sf"/>
</dbReference>
<dbReference type="NCBIfam" id="TIGR00357">
    <property type="entry name" value="peptide-methionine (R)-S-oxide reductase MsrB"/>
    <property type="match status" value="1"/>
</dbReference>
<dbReference type="PANTHER" id="PTHR10173">
    <property type="entry name" value="METHIONINE SULFOXIDE REDUCTASE"/>
    <property type="match status" value="1"/>
</dbReference>
<dbReference type="PANTHER" id="PTHR10173:SF59">
    <property type="entry name" value="PEPTIDE METHIONINE SULFOXIDE REDUCTASE MSRA_MSRB"/>
    <property type="match status" value="1"/>
</dbReference>
<dbReference type="Pfam" id="PF01641">
    <property type="entry name" value="SelR"/>
    <property type="match status" value="1"/>
</dbReference>
<dbReference type="SUPFAM" id="SSF51316">
    <property type="entry name" value="Mss4-like"/>
    <property type="match status" value="1"/>
</dbReference>
<dbReference type="PROSITE" id="PS51790">
    <property type="entry name" value="MSRB"/>
    <property type="match status" value="1"/>
</dbReference>
<accession>C0MDV8</accession>
<reference key="1">
    <citation type="journal article" date="2009" name="PLoS Pathog.">
        <title>Genomic evidence for the evolution of Streptococcus equi: host restriction, increased virulence, and genetic exchange with human pathogens.</title>
        <authorList>
            <person name="Holden M.T.G."/>
            <person name="Heather Z."/>
            <person name="Paillot R."/>
            <person name="Steward K.F."/>
            <person name="Webb K."/>
            <person name="Ainslie F."/>
            <person name="Jourdan T."/>
            <person name="Bason N.C."/>
            <person name="Holroyd N.E."/>
            <person name="Mungall K."/>
            <person name="Quail M.A."/>
            <person name="Sanders M."/>
            <person name="Simmonds M."/>
            <person name="Willey D."/>
            <person name="Brooks K."/>
            <person name="Aanensen D.M."/>
            <person name="Spratt B.G."/>
            <person name="Jolley K.A."/>
            <person name="Maiden M.C.J."/>
            <person name="Kehoe M."/>
            <person name="Chanter N."/>
            <person name="Bentley S.D."/>
            <person name="Robinson C."/>
            <person name="Maskell D.J."/>
            <person name="Parkhill J."/>
            <person name="Waller A.S."/>
        </authorList>
    </citation>
    <scope>NUCLEOTIDE SEQUENCE [LARGE SCALE GENOMIC DNA]</scope>
    <source>
        <strain>H70</strain>
    </source>
</reference>
<proteinExistence type="inferred from homology"/>
<feature type="chain" id="PRO_1000215180" description="Peptide methionine sulfoxide reductase MsrB">
    <location>
        <begin position="1"/>
        <end position="145"/>
    </location>
</feature>
<feature type="domain" description="MsrB" evidence="2">
    <location>
        <begin position="4"/>
        <end position="127"/>
    </location>
</feature>
<feature type="active site" description="Nucleophile" evidence="2">
    <location>
        <position position="116"/>
    </location>
</feature>
<sequence length="145" mass="16472">MESKEELRQRIGDLAFEVTQHAATERAFTGQYDDFFEKGIYVDVVSGEVLFSSLDKFNSGCGWPAFSRPIHHRMVTNHHDSSHGMRRVEVKSREAGSHLGHVFNDGPREAGGLRYCINSAALKFIPYDQMEQEGYAEWLGIFDKS</sequence>
<keyword id="KW-0560">Oxidoreductase</keyword>
<name>MSRB_STRS7</name>
<protein>
    <recommendedName>
        <fullName evidence="1">Peptide methionine sulfoxide reductase MsrB</fullName>
        <ecNumber evidence="1">1.8.4.12</ecNumber>
    </recommendedName>
    <alternativeName>
        <fullName evidence="1">Peptide-methionine (R)-S-oxide reductase</fullName>
    </alternativeName>
</protein>
<organism>
    <name type="scientific">Streptococcus equi subsp. zooepidemicus (strain H70)</name>
    <dbReference type="NCBI Taxonomy" id="553483"/>
    <lineage>
        <taxon>Bacteria</taxon>
        <taxon>Bacillati</taxon>
        <taxon>Bacillota</taxon>
        <taxon>Bacilli</taxon>
        <taxon>Lactobacillales</taxon>
        <taxon>Streptococcaceae</taxon>
        <taxon>Streptococcus</taxon>
    </lineage>
</organism>
<gene>
    <name evidence="1" type="primary">msrB</name>
    <name type="ordered locus">SZO_07840</name>
</gene>